<comment type="function">
    <text evidence="1">Catalyzes the N-acylation of UDP-3-O-acylglucosamine using 3-hydroxyacyl-ACP as the acyl donor. Is involved in the biosynthesis of lipid A, a phosphorylated glycolipid that anchors the lipopolysaccharide to the outer membrane of the cell.</text>
</comment>
<comment type="catalytic activity">
    <reaction evidence="1">
        <text>a UDP-3-O-[(3R)-3-hydroxyacyl]-alpha-D-glucosamine + a (3R)-hydroxyacyl-[ACP] = a UDP-2-N,3-O-bis[(3R)-3-hydroxyacyl]-alpha-D-glucosamine + holo-[ACP] + H(+)</text>
        <dbReference type="Rhea" id="RHEA:53836"/>
        <dbReference type="Rhea" id="RHEA-COMP:9685"/>
        <dbReference type="Rhea" id="RHEA-COMP:9945"/>
        <dbReference type="ChEBI" id="CHEBI:15378"/>
        <dbReference type="ChEBI" id="CHEBI:64479"/>
        <dbReference type="ChEBI" id="CHEBI:78827"/>
        <dbReference type="ChEBI" id="CHEBI:137740"/>
        <dbReference type="ChEBI" id="CHEBI:137748"/>
        <dbReference type="EC" id="2.3.1.191"/>
    </reaction>
</comment>
<comment type="pathway">
    <text evidence="1">Bacterial outer membrane biogenesis; LPS lipid A biosynthesis.</text>
</comment>
<comment type="subunit">
    <text evidence="1">Homotrimer.</text>
</comment>
<comment type="similarity">
    <text evidence="1">Belongs to the transferase hexapeptide repeat family. LpxD subfamily.</text>
</comment>
<gene>
    <name evidence="1" type="primary">lpxD</name>
    <name type="ordered locus">SO_1639</name>
</gene>
<dbReference type="EC" id="2.3.1.191" evidence="1"/>
<dbReference type="EMBL" id="AE014299">
    <property type="protein sequence ID" value="AAN54694.1"/>
    <property type="molecule type" value="Genomic_DNA"/>
</dbReference>
<dbReference type="RefSeq" id="NP_717250.1">
    <property type="nucleotide sequence ID" value="NC_004347.2"/>
</dbReference>
<dbReference type="RefSeq" id="WP_011071794.1">
    <property type="nucleotide sequence ID" value="NC_004347.2"/>
</dbReference>
<dbReference type="SMR" id="Q8EGG5"/>
<dbReference type="STRING" id="211586.SO_1639"/>
<dbReference type="PaxDb" id="211586-SO_1639"/>
<dbReference type="KEGG" id="son:SO_1639"/>
<dbReference type="PATRIC" id="fig|1028802.3.peg.816"/>
<dbReference type="eggNOG" id="COG1044">
    <property type="taxonomic scope" value="Bacteria"/>
</dbReference>
<dbReference type="HOGENOM" id="CLU_049865_0_1_6"/>
<dbReference type="OrthoDB" id="9784739at2"/>
<dbReference type="PhylomeDB" id="Q8EGG5"/>
<dbReference type="BioCyc" id="SONE211586:G1GMP-1509-MONOMER"/>
<dbReference type="UniPathway" id="UPA00973"/>
<dbReference type="Proteomes" id="UP000008186">
    <property type="component" value="Chromosome"/>
</dbReference>
<dbReference type="GO" id="GO:0016020">
    <property type="term" value="C:membrane"/>
    <property type="evidence" value="ECO:0007669"/>
    <property type="project" value="GOC"/>
</dbReference>
<dbReference type="GO" id="GO:0016410">
    <property type="term" value="F:N-acyltransferase activity"/>
    <property type="evidence" value="ECO:0007669"/>
    <property type="project" value="InterPro"/>
</dbReference>
<dbReference type="GO" id="GO:0009245">
    <property type="term" value="P:lipid A biosynthetic process"/>
    <property type="evidence" value="ECO:0007669"/>
    <property type="project" value="UniProtKB-UniRule"/>
</dbReference>
<dbReference type="CDD" id="cd03352">
    <property type="entry name" value="LbH_LpxD"/>
    <property type="match status" value="1"/>
</dbReference>
<dbReference type="Gene3D" id="1.20.5.170">
    <property type="match status" value="1"/>
</dbReference>
<dbReference type="Gene3D" id="2.160.10.10">
    <property type="entry name" value="Hexapeptide repeat proteins"/>
    <property type="match status" value="1"/>
</dbReference>
<dbReference type="Gene3D" id="3.40.1390.10">
    <property type="entry name" value="MurE/MurF, N-terminal domain"/>
    <property type="match status" value="1"/>
</dbReference>
<dbReference type="HAMAP" id="MF_00523">
    <property type="entry name" value="LpxD"/>
    <property type="match status" value="1"/>
</dbReference>
<dbReference type="InterPro" id="IPR001451">
    <property type="entry name" value="Hexapep"/>
</dbReference>
<dbReference type="InterPro" id="IPR007691">
    <property type="entry name" value="LpxD"/>
</dbReference>
<dbReference type="InterPro" id="IPR011004">
    <property type="entry name" value="Trimer_LpxA-like_sf"/>
</dbReference>
<dbReference type="InterPro" id="IPR020573">
    <property type="entry name" value="UDP_GlcNAc_AcTrfase_non-rep"/>
</dbReference>
<dbReference type="NCBIfam" id="TIGR01853">
    <property type="entry name" value="lipid_A_lpxD"/>
    <property type="match status" value="1"/>
</dbReference>
<dbReference type="NCBIfam" id="NF002060">
    <property type="entry name" value="PRK00892.1"/>
    <property type="match status" value="1"/>
</dbReference>
<dbReference type="PANTHER" id="PTHR43378">
    <property type="entry name" value="UDP-3-O-ACYLGLUCOSAMINE N-ACYLTRANSFERASE"/>
    <property type="match status" value="1"/>
</dbReference>
<dbReference type="PANTHER" id="PTHR43378:SF2">
    <property type="entry name" value="UDP-3-O-ACYLGLUCOSAMINE N-ACYLTRANSFERASE 1, MITOCHONDRIAL-RELATED"/>
    <property type="match status" value="1"/>
</dbReference>
<dbReference type="Pfam" id="PF00132">
    <property type="entry name" value="Hexapep"/>
    <property type="match status" value="2"/>
</dbReference>
<dbReference type="Pfam" id="PF14602">
    <property type="entry name" value="Hexapep_2"/>
    <property type="match status" value="2"/>
</dbReference>
<dbReference type="Pfam" id="PF04613">
    <property type="entry name" value="LpxD"/>
    <property type="match status" value="1"/>
</dbReference>
<dbReference type="SUPFAM" id="SSF51161">
    <property type="entry name" value="Trimeric LpxA-like enzymes"/>
    <property type="match status" value="1"/>
</dbReference>
<dbReference type="PROSITE" id="PS00101">
    <property type="entry name" value="HEXAPEP_TRANSFERASES"/>
    <property type="match status" value="1"/>
</dbReference>
<proteinExistence type="inferred from homology"/>
<evidence type="ECO:0000255" key="1">
    <source>
        <dbReference type="HAMAP-Rule" id="MF_00523"/>
    </source>
</evidence>
<organism>
    <name type="scientific">Shewanella oneidensis (strain ATCC 700550 / JCM 31522 / CIP 106686 / LMG 19005 / NCIMB 14063 / MR-1)</name>
    <dbReference type="NCBI Taxonomy" id="211586"/>
    <lineage>
        <taxon>Bacteria</taxon>
        <taxon>Pseudomonadati</taxon>
        <taxon>Pseudomonadota</taxon>
        <taxon>Gammaproteobacteria</taxon>
        <taxon>Alteromonadales</taxon>
        <taxon>Shewanellaceae</taxon>
        <taxon>Shewanella</taxon>
    </lineage>
</organism>
<protein>
    <recommendedName>
        <fullName evidence="1">UDP-3-O-acylglucosamine N-acyltransferase</fullName>
        <ecNumber evidence="1">2.3.1.191</ecNumber>
    </recommendedName>
</protein>
<keyword id="KW-0012">Acyltransferase</keyword>
<keyword id="KW-0441">Lipid A biosynthesis</keyword>
<keyword id="KW-0444">Lipid biosynthesis</keyword>
<keyword id="KW-0443">Lipid metabolism</keyword>
<keyword id="KW-1185">Reference proteome</keyword>
<keyword id="KW-0677">Repeat</keyword>
<keyword id="KW-0808">Transferase</keyword>
<name>LPXD_SHEON</name>
<accession>Q8EGG5</accession>
<sequence>MKSVTLKELSLLLDGVVQGDETLVINSVATLEHATSGQISFLANSKYRAQLESTQASAVLLSAKDAQDYQGTALVVKDPYVGFARVAQLLDTTPKAAMGIHPSAQIDPSAQLGDGVAIGANAVIGANVILGENVQIGAGTVIGQDSIIGSNTRLWANVTLYHNVHLGQDCIIHSGAIIGSDGFGYANERGQWIKIPQTGGVRIGDRVEIGANSTIDRGALGHTEIHNGVIIDNQVQVAHNDIIGENTAIAGSTTIAGSVTIGKHCIIGGNCAIAGHLTIADGVHLSGATNVTGNMREPGLYSSATVAMDNNLWRKNTVRFRQLDELFQRVKAIEKNLNTPE</sequence>
<feature type="chain" id="PRO_0000059703" description="UDP-3-O-acylglucosamine N-acyltransferase">
    <location>
        <begin position="1"/>
        <end position="341"/>
    </location>
</feature>
<feature type="active site" description="Proton acceptor" evidence="1">
    <location>
        <position position="239"/>
    </location>
</feature>
<reference key="1">
    <citation type="journal article" date="2002" name="Nat. Biotechnol.">
        <title>Genome sequence of the dissimilatory metal ion-reducing bacterium Shewanella oneidensis.</title>
        <authorList>
            <person name="Heidelberg J.F."/>
            <person name="Paulsen I.T."/>
            <person name="Nelson K.E."/>
            <person name="Gaidos E.J."/>
            <person name="Nelson W.C."/>
            <person name="Read T.D."/>
            <person name="Eisen J.A."/>
            <person name="Seshadri R."/>
            <person name="Ward N.L."/>
            <person name="Methe B.A."/>
            <person name="Clayton R.A."/>
            <person name="Meyer T."/>
            <person name="Tsapin A."/>
            <person name="Scott J."/>
            <person name="Beanan M.J."/>
            <person name="Brinkac L.M."/>
            <person name="Daugherty S.C."/>
            <person name="DeBoy R.T."/>
            <person name="Dodson R.J."/>
            <person name="Durkin A.S."/>
            <person name="Haft D.H."/>
            <person name="Kolonay J.F."/>
            <person name="Madupu R."/>
            <person name="Peterson J.D."/>
            <person name="Umayam L.A."/>
            <person name="White O."/>
            <person name="Wolf A.M."/>
            <person name="Vamathevan J.J."/>
            <person name="Weidman J.F."/>
            <person name="Impraim M."/>
            <person name="Lee K."/>
            <person name="Berry K.J."/>
            <person name="Lee C."/>
            <person name="Mueller J."/>
            <person name="Khouri H.M."/>
            <person name="Gill J."/>
            <person name="Utterback T.R."/>
            <person name="McDonald L.A."/>
            <person name="Feldblyum T.V."/>
            <person name="Smith H.O."/>
            <person name="Venter J.C."/>
            <person name="Nealson K.H."/>
            <person name="Fraser C.M."/>
        </authorList>
    </citation>
    <scope>NUCLEOTIDE SEQUENCE [LARGE SCALE GENOMIC DNA]</scope>
    <source>
        <strain>ATCC 700550 / JCM 31522 / CIP 106686 / LMG 19005 / NCIMB 14063 / MR-1</strain>
    </source>
</reference>